<reference key="1">
    <citation type="journal article" date="1989" name="J. Virol.">
        <title>Cloning and partial DNA sequencing of two new human papillomavirus types associated with condylomas and low-grade cervical neoplasia.</title>
        <authorList>
            <person name="Loerincz A.T."/>
            <person name="Quinn A.P."/>
            <person name="Goldsborough M.D."/>
            <person name="Schmidt B.J."/>
            <person name="Temple G.F."/>
        </authorList>
    </citation>
    <scope>NUCLEOTIDE SEQUENCE [GENOMIC DNA]</scope>
</reference>
<reference key="2">
    <citation type="submission" date="1995-10" db="EMBL/GenBank/DDBJ databases">
        <authorList>
            <person name="Delius H."/>
        </authorList>
    </citation>
    <scope>NUCLEOTIDE SEQUENCE [GENOMIC DNA]</scope>
</reference>
<keyword id="KW-0010">Activator</keyword>
<keyword id="KW-0238">DNA-binding</keyword>
<keyword id="KW-0244">Early protein</keyword>
<keyword id="KW-1035">Host cytoplasm</keyword>
<keyword id="KW-1048">Host nucleus</keyword>
<keyword id="KW-0945">Host-virus interaction</keyword>
<keyword id="KW-1090">Inhibition of host innate immune response by virus</keyword>
<keyword id="KW-0479">Metal-binding</keyword>
<keyword id="KW-1119">Modulation of host cell apoptosis by virus</keyword>
<keyword id="KW-1185">Reference proteome</keyword>
<keyword id="KW-0804">Transcription</keyword>
<keyword id="KW-0805">Transcription regulation</keyword>
<keyword id="KW-0899">Viral immunoevasion</keyword>
<keyword id="KW-0862">Zinc</keyword>
<keyword id="KW-0863">Zinc-finger</keyword>
<organism>
    <name type="scientific">Human papillomavirus 44</name>
    <dbReference type="NCBI Taxonomy" id="10592"/>
    <lineage>
        <taxon>Viruses</taxon>
        <taxon>Monodnaviria</taxon>
        <taxon>Shotokuvirae</taxon>
        <taxon>Cossaviricota</taxon>
        <taxon>Papovaviricetes</taxon>
        <taxon>Zurhausenvirales</taxon>
        <taxon>Papillomaviridae</taxon>
        <taxon>Firstpapillomavirinae</taxon>
        <taxon>Alphapapillomavirus</taxon>
        <taxon>Alphapapillomavirus 10</taxon>
    </lineage>
</organism>
<proteinExistence type="inferred from homology"/>
<accession>P19710</accession>
<gene>
    <name evidence="1" type="primary">E6</name>
</gene>
<organismHost>
    <name type="scientific">Homo sapiens</name>
    <name type="common">Human</name>
    <dbReference type="NCBI Taxonomy" id="9606"/>
</organismHost>
<feature type="chain" id="PRO_0000133363" description="Protein E6">
    <location>
        <begin position="1"/>
        <end position="150"/>
    </location>
</feature>
<feature type="zinc finger region" evidence="1">
    <location>
        <begin position="31"/>
        <end position="67"/>
    </location>
</feature>
<feature type="zinc finger region" evidence="1">
    <location>
        <begin position="104"/>
        <end position="140"/>
    </location>
</feature>
<name>VE6_HPV44</name>
<evidence type="ECO:0000255" key="1">
    <source>
        <dbReference type="HAMAP-Rule" id="MF_04006"/>
    </source>
</evidence>
<evidence type="ECO:0000305" key="2"/>
<sequence>MESANASTSAQSIDQLCKECNIPMHNLQILCVFCRKTLSTAEVYSFAYKQLYVVYRGNFPFAACAICLELQGKVNQFRHFNYAGYAVTVEEETNKSILDVLIRCYLCHKPLCHVEKVRHILDKARFIKLQDTWKGRCFHCWTSCMETILP</sequence>
<comment type="function">
    <text>This protein may be involved in the oncogenic potential of this virus (cervical neoplasia-associated virus).</text>
</comment>
<comment type="function">
    <text evidence="1">Plays a major role in the induction and maintenance of cellular transformation. E6 associates with host UBE3A/E6-AP ubiquitin-protein ligase and modulates its activity. Sequesters tumor suppressor TP53 in the host cytoplasm and modulates its activity by interacting with host EP300 that results in the reduction of TP53 acetylation and activation. In turn, apoptosis induced by DNA damage is inhibited. E6 also protects host keratinocytes from apoptosis by mediating the degradation of host BAK1. May also inhibit host immune response.</text>
</comment>
<comment type="subunit">
    <text evidence="1">Forms homodimers. Interacts with ubiquitin-protein ligase UBE3A/E6-AP; this interaction stimulates UBE3A ubiquitin activity. Interacts with host TP53 and EP300; this interaction inhibits TP53 activity.</text>
</comment>
<comment type="subcellular location">
    <subcellularLocation>
        <location evidence="1">Host cytoplasm</location>
    </subcellularLocation>
    <subcellularLocation>
        <location evidence="1">Host nucleus</location>
    </subcellularLocation>
</comment>
<comment type="miscellaneous">
    <text evidence="1">Belongs to the low risk human alphapapillomavirus family. The cancer-causing human papillomavirus E6 protein has a unique carboxy terminal PDZ domain containing substrate but low risk E6s do not possess this domain.</text>
</comment>
<comment type="similarity">
    <text evidence="2">Belongs to the papillomaviridae E6 protein family.</text>
</comment>
<dbReference type="EMBL" id="M27023">
    <property type="protein sequence ID" value="AAA63454.1"/>
    <property type="molecule type" value="Genomic_DNA"/>
</dbReference>
<dbReference type="EMBL" id="U31788">
    <property type="protein sequence ID" value="AAA79457.1"/>
    <property type="molecule type" value="Genomic_DNA"/>
</dbReference>
<dbReference type="PIR" id="B34144">
    <property type="entry name" value="W6WL44"/>
</dbReference>
<dbReference type="SMR" id="P19710"/>
<dbReference type="Proteomes" id="UP000009123">
    <property type="component" value="Genome"/>
</dbReference>
<dbReference type="GO" id="GO:0030430">
    <property type="term" value="C:host cell cytoplasm"/>
    <property type="evidence" value="ECO:0007669"/>
    <property type="project" value="UniProtKB-SubCell"/>
</dbReference>
<dbReference type="GO" id="GO:0042025">
    <property type="term" value="C:host cell nucleus"/>
    <property type="evidence" value="ECO:0007669"/>
    <property type="project" value="UniProtKB-SubCell"/>
</dbReference>
<dbReference type="GO" id="GO:0003677">
    <property type="term" value="F:DNA binding"/>
    <property type="evidence" value="ECO:0007669"/>
    <property type="project" value="UniProtKB-UniRule"/>
</dbReference>
<dbReference type="GO" id="GO:0008270">
    <property type="term" value="F:zinc ion binding"/>
    <property type="evidence" value="ECO:0007669"/>
    <property type="project" value="UniProtKB-KW"/>
</dbReference>
<dbReference type="GO" id="GO:0006351">
    <property type="term" value="P:DNA-templated transcription"/>
    <property type="evidence" value="ECO:0007669"/>
    <property type="project" value="UniProtKB-UniRule"/>
</dbReference>
<dbReference type="GO" id="GO:0006355">
    <property type="term" value="P:regulation of DNA-templated transcription"/>
    <property type="evidence" value="ECO:0007669"/>
    <property type="project" value="UniProtKB-UniRule"/>
</dbReference>
<dbReference type="GO" id="GO:0052150">
    <property type="term" value="P:symbiont-mediated perturbation of host apoptosis"/>
    <property type="evidence" value="ECO:0007669"/>
    <property type="project" value="UniProtKB-KW"/>
</dbReference>
<dbReference type="GO" id="GO:0039648">
    <property type="term" value="P:symbiont-mediated perturbation of host ubiquitin-like protein modification"/>
    <property type="evidence" value="ECO:0007669"/>
    <property type="project" value="UniProtKB-UniRule"/>
</dbReference>
<dbReference type="GO" id="GO:0052170">
    <property type="term" value="P:symbiont-mediated suppression of host innate immune response"/>
    <property type="evidence" value="ECO:0007669"/>
    <property type="project" value="UniProtKB-KW"/>
</dbReference>
<dbReference type="GO" id="GO:0039502">
    <property type="term" value="P:symbiont-mediated suppression of host type I interferon-mediated signaling pathway"/>
    <property type="evidence" value="ECO:0007669"/>
    <property type="project" value="UniProtKB-UniRule"/>
</dbReference>
<dbReference type="Gene3D" id="3.30.240.40">
    <property type="entry name" value="E6 early regulatory protein"/>
    <property type="match status" value="2"/>
</dbReference>
<dbReference type="HAMAP" id="MF_04006">
    <property type="entry name" value="HPV_E6"/>
    <property type="match status" value="1"/>
</dbReference>
<dbReference type="InterPro" id="IPR001334">
    <property type="entry name" value="E6"/>
</dbReference>
<dbReference type="InterPro" id="IPR038575">
    <property type="entry name" value="E6_sf"/>
</dbReference>
<dbReference type="Pfam" id="PF00518">
    <property type="entry name" value="E6"/>
    <property type="match status" value="1"/>
</dbReference>
<dbReference type="SUPFAM" id="SSF161229">
    <property type="entry name" value="E6 C-terminal domain-like"/>
    <property type="match status" value="2"/>
</dbReference>
<protein>
    <recommendedName>
        <fullName evidence="1">Protein E6</fullName>
    </recommendedName>
</protein>